<protein>
    <recommendedName>
        <fullName evidence="1">Elongation factor 4</fullName>
        <shortName evidence="1">EF-4</shortName>
        <ecNumber evidence="1">3.6.5.n1</ecNumber>
    </recommendedName>
    <alternativeName>
        <fullName evidence="1">Ribosomal back-translocase LepA</fullName>
    </alternativeName>
</protein>
<organism>
    <name type="scientific">Streptococcus agalactiae serotype V (strain ATCC BAA-611 / 2603 V/R)</name>
    <dbReference type="NCBI Taxonomy" id="208435"/>
    <lineage>
        <taxon>Bacteria</taxon>
        <taxon>Bacillati</taxon>
        <taxon>Bacillota</taxon>
        <taxon>Bacilli</taxon>
        <taxon>Lactobacillales</taxon>
        <taxon>Streptococcaceae</taxon>
        <taxon>Streptococcus</taxon>
    </lineage>
</organism>
<dbReference type="EC" id="3.6.5.n1" evidence="1"/>
<dbReference type="EMBL" id="AE009948">
    <property type="protein sequence ID" value="AAM99792.1"/>
    <property type="molecule type" value="Genomic_DNA"/>
</dbReference>
<dbReference type="RefSeq" id="NP_687920.1">
    <property type="nucleotide sequence ID" value="NC_004116.1"/>
</dbReference>
<dbReference type="RefSeq" id="WP_001019133.1">
    <property type="nucleotide sequence ID" value="NC_004116.1"/>
</dbReference>
<dbReference type="SMR" id="P65274"/>
<dbReference type="STRING" id="208435.SAG0906"/>
<dbReference type="KEGG" id="sag:SAG0906"/>
<dbReference type="PATRIC" id="fig|208435.3.peg.911"/>
<dbReference type="HOGENOM" id="CLU_009995_3_3_9"/>
<dbReference type="OrthoDB" id="9801591at2"/>
<dbReference type="Proteomes" id="UP000000821">
    <property type="component" value="Chromosome"/>
</dbReference>
<dbReference type="GO" id="GO:0005886">
    <property type="term" value="C:plasma membrane"/>
    <property type="evidence" value="ECO:0007669"/>
    <property type="project" value="UniProtKB-SubCell"/>
</dbReference>
<dbReference type="GO" id="GO:0005525">
    <property type="term" value="F:GTP binding"/>
    <property type="evidence" value="ECO:0007669"/>
    <property type="project" value="UniProtKB-UniRule"/>
</dbReference>
<dbReference type="GO" id="GO:0003924">
    <property type="term" value="F:GTPase activity"/>
    <property type="evidence" value="ECO:0007669"/>
    <property type="project" value="UniProtKB-UniRule"/>
</dbReference>
<dbReference type="GO" id="GO:0043022">
    <property type="term" value="F:ribosome binding"/>
    <property type="evidence" value="ECO:0007669"/>
    <property type="project" value="UniProtKB-UniRule"/>
</dbReference>
<dbReference type="GO" id="GO:0003746">
    <property type="term" value="F:translation elongation factor activity"/>
    <property type="evidence" value="ECO:0007669"/>
    <property type="project" value="UniProtKB-UniRule"/>
</dbReference>
<dbReference type="GO" id="GO:0045727">
    <property type="term" value="P:positive regulation of translation"/>
    <property type="evidence" value="ECO:0007669"/>
    <property type="project" value="UniProtKB-UniRule"/>
</dbReference>
<dbReference type="CDD" id="cd03699">
    <property type="entry name" value="EF4_II"/>
    <property type="match status" value="1"/>
</dbReference>
<dbReference type="CDD" id="cd16260">
    <property type="entry name" value="EF4_III"/>
    <property type="match status" value="1"/>
</dbReference>
<dbReference type="CDD" id="cd01890">
    <property type="entry name" value="LepA"/>
    <property type="match status" value="1"/>
</dbReference>
<dbReference type="CDD" id="cd03709">
    <property type="entry name" value="lepA_C"/>
    <property type="match status" value="1"/>
</dbReference>
<dbReference type="FunFam" id="3.40.50.300:FF:000078">
    <property type="entry name" value="Elongation factor 4"/>
    <property type="match status" value="1"/>
</dbReference>
<dbReference type="FunFam" id="2.40.30.10:FF:000015">
    <property type="entry name" value="Translation factor GUF1, mitochondrial"/>
    <property type="match status" value="1"/>
</dbReference>
<dbReference type="FunFam" id="3.30.70.240:FF:000007">
    <property type="entry name" value="Translation factor GUF1, mitochondrial"/>
    <property type="match status" value="1"/>
</dbReference>
<dbReference type="FunFam" id="3.30.70.2570:FF:000001">
    <property type="entry name" value="Translation factor GUF1, mitochondrial"/>
    <property type="match status" value="1"/>
</dbReference>
<dbReference type="FunFam" id="3.30.70.870:FF:000004">
    <property type="entry name" value="Translation factor GUF1, mitochondrial"/>
    <property type="match status" value="1"/>
</dbReference>
<dbReference type="Gene3D" id="3.30.70.240">
    <property type="match status" value="1"/>
</dbReference>
<dbReference type="Gene3D" id="3.30.70.2570">
    <property type="entry name" value="Elongation factor 4, C-terminal domain"/>
    <property type="match status" value="1"/>
</dbReference>
<dbReference type="Gene3D" id="3.30.70.870">
    <property type="entry name" value="Elongation Factor G (Translational Gtpase), domain 3"/>
    <property type="match status" value="1"/>
</dbReference>
<dbReference type="Gene3D" id="3.40.50.300">
    <property type="entry name" value="P-loop containing nucleotide triphosphate hydrolases"/>
    <property type="match status" value="1"/>
</dbReference>
<dbReference type="Gene3D" id="2.40.30.10">
    <property type="entry name" value="Translation factors"/>
    <property type="match status" value="1"/>
</dbReference>
<dbReference type="HAMAP" id="MF_00071">
    <property type="entry name" value="LepA"/>
    <property type="match status" value="1"/>
</dbReference>
<dbReference type="InterPro" id="IPR006297">
    <property type="entry name" value="EF-4"/>
</dbReference>
<dbReference type="InterPro" id="IPR035647">
    <property type="entry name" value="EFG_III/V"/>
</dbReference>
<dbReference type="InterPro" id="IPR000640">
    <property type="entry name" value="EFG_V-like"/>
</dbReference>
<dbReference type="InterPro" id="IPR004161">
    <property type="entry name" value="EFTu-like_2"/>
</dbReference>
<dbReference type="InterPro" id="IPR031157">
    <property type="entry name" value="G_TR_CS"/>
</dbReference>
<dbReference type="InterPro" id="IPR038363">
    <property type="entry name" value="LepA_C_sf"/>
</dbReference>
<dbReference type="InterPro" id="IPR013842">
    <property type="entry name" value="LepA_CTD"/>
</dbReference>
<dbReference type="InterPro" id="IPR035654">
    <property type="entry name" value="LepA_IV"/>
</dbReference>
<dbReference type="InterPro" id="IPR027417">
    <property type="entry name" value="P-loop_NTPase"/>
</dbReference>
<dbReference type="InterPro" id="IPR005225">
    <property type="entry name" value="Small_GTP-bd"/>
</dbReference>
<dbReference type="InterPro" id="IPR000795">
    <property type="entry name" value="T_Tr_GTP-bd_dom"/>
</dbReference>
<dbReference type="NCBIfam" id="TIGR01393">
    <property type="entry name" value="lepA"/>
    <property type="match status" value="1"/>
</dbReference>
<dbReference type="NCBIfam" id="TIGR00231">
    <property type="entry name" value="small_GTP"/>
    <property type="match status" value="1"/>
</dbReference>
<dbReference type="PANTHER" id="PTHR43512:SF4">
    <property type="entry name" value="TRANSLATION FACTOR GUF1 HOMOLOG, CHLOROPLASTIC"/>
    <property type="match status" value="1"/>
</dbReference>
<dbReference type="PANTHER" id="PTHR43512">
    <property type="entry name" value="TRANSLATION FACTOR GUF1-RELATED"/>
    <property type="match status" value="1"/>
</dbReference>
<dbReference type="Pfam" id="PF00679">
    <property type="entry name" value="EFG_C"/>
    <property type="match status" value="1"/>
</dbReference>
<dbReference type="Pfam" id="PF00009">
    <property type="entry name" value="GTP_EFTU"/>
    <property type="match status" value="1"/>
</dbReference>
<dbReference type="Pfam" id="PF03144">
    <property type="entry name" value="GTP_EFTU_D2"/>
    <property type="match status" value="1"/>
</dbReference>
<dbReference type="Pfam" id="PF06421">
    <property type="entry name" value="LepA_C"/>
    <property type="match status" value="1"/>
</dbReference>
<dbReference type="PRINTS" id="PR00315">
    <property type="entry name" value="ELONGATNFCT"/>
</dbReference>
<dbReference type="SMART" id="SM00838">
    <property type="entry name" value="EFG_C"/>
    <property type="match status" value="1"/>
</dbReference>
<dbReference type="SUPFAM" id="SSF54980">
    <property type="entry name" value="EF-G C-terminal domain-like"/>
    <property type="match status" value="2"/>
</dbReference>
<dbReference type="SUPFAM" id="SSF52540">
    <property type="entry name" value="P-loop containing nucleoside triphosphate hydrolases"/>
    <property type="match status" value="1"/>
</dbReference>
<dbReference type="PROSITE" id="PS00301">
    <property type="entry name" value="G_TR_1"/>
    <property type="match status" value="1"/>
</dbReference>
<dbReference type="PROSITE" id="PS51722">
    <property type="entry name" value="G_TR_2"/>
    <property type="match status" value="1"/>
</dbReference>
<sequence>MNIEDLKKRQEKIRNFSIIAHIDHGKSTLADRILEKTETVSSREMQAQLLDSMDLERERGITIKLNAIELNYTAKDGETYIFHLIDTPGHVDFTYEVSRSLAACEGAILVVDAAQGIEAQTLANVYLALDNDLEILPVINKIDLPAADPERVRAEVEDVIGLDASEAVLASAKAGIGIEEILEQIVEKVPAPTGEVDAPLQALIFDSVYDAYRGVILQVRIVNGMVKPGDKIQMMSNGKTFDVTEVGIFTPKAVGRDFLATGDVGYIAASIKTVADTRVGDTITLANNPAIEPLHGYKQMNPMVFAGLYPIESNKYNDLREALEKLQLNDASLQFEPETSQALGFGFRCGFLGLLHMDVIQERLEREFNIDLIMTAPSVVYHVNTTDGEMLEVSNPSEFPDPTRVDSIEEPYVKAQIMVPQEFVGAVMELAQRKRGDFVTMDYIDDNRVNVIYQIPLAEIVFDFFDKLKSSTRGYASFDYEISEYRRSQLVKMDILLNGDKVDALSFIVHKEFAYERGKLIVDKLKKIIPRQQFEVPIQAAIGQKIVARSDIKALRKNVLAKCYGGDVSRKRKLLEKQKAGKKRMKAIGSVEVPQEAFLSVLSMDDDDKK</sequence>
<reference key="1">
    <citation type="journal article" date="2002" name="Proc. Natl. Acad. Sci. U.S.A.">
        <title>Complete genome sequence and comparative genomic analysis of an emerging human pathogen, serotype V Streptococcus agalactiae.</title>
        <authorList>
            <person name="Tettelin H."/>
            <person name="Masignani V."/>
            <person name="Cieslewicz M.J."/>
            <person name="Eisen J.A."/>
            <person name="Peterson S.N."/>
            <person name="Wessels M.R."/>
            <person name="Paulsen I.T."/>
            <person name="Nelson K.E."/>
            <person name="Margarit I."/>
            <person name="Read T.D."/>
            <person name="Madoff L.C."/>
            <person name="Wolf A.M."/>
            <person name="Beanan M.J."/>
            <person name="Brinkac L.M."/>
            <person name="Daugherty S.C."/>
            <person name="DeBoy R.T."/>
            <person name="Durkin A.S."/>
            <person name="Kolonay J.F."/>
            <person name="Madupu R."/>
            <person name="Lewis M.R."/>
            <person name="Radune D."/>
            <person name="Fedorova N.B."/>
            <person name="Scanlan D."/>
            <person name="Khouri H.M."/>
            <person name="Mulligan S."/>
            <person name="Carty H.A."/>
            <person name="Cline R.T."/>
            <person name="Van Aken S.E."/>
            <person name="Gill J."/>
            <person name="Scarselli M."/>
            <person name="Mora M."/>
            <person name="Iacobini E.T."/>
            <person name="Brettoni C."/>
            <person name="Galli G."/>
            <person name="Mariani M."/>
            <person name="Vegni F."/>
            <person name="Maione D."/>
            <person name="Rinaudo D."/>
            <person name="Rappuoli R."/>
            <person name="Telford J.L."/>
            <person name="Kasper D.L."/>
            <person name="Grandi G."/>
            <person name="Fraser C.M."/>
        </authorList>
    </citation>
    <scope>NUCLEOTIDE SEQUENCE [LARGE SCALE GENOMIC DNA]</scope>
    <source>
        <strain>ATCC BAA-611 / 2603 V/R</strain>
    </source>
</reference>
<accession>P65274</accession>
<accession>Q8E030</accession>
<accession>Q8E5R3</accession>
<comment type="function">
    <text evidence="1">Required for accurate and efficient protein synthesis under certain stress conditions. May act as a fidelity factor of the translation reaction, by catalyzing a one-codon backward translocation of tRNAs on improperly translocated ribosomes. Back-translocation proceeds from a post-translocation (POST) complex to a pre-translocation (PRE) complex, thus giving elongation factor G a second chance to translocate the tRNAs correctly. Binds to ribosomes in a GTP-dependent manner.</text>
</comment>
<comment type="catalytic activity">
    <reaction evidence="1">
        <text>GTP + H2O = GDP + phosphate + H(+)</text>
        <dbReference type="Rhea" id="RHEA:19669"/>
        <dbReference type="ChEBI" id="CHEBI:15377"/>
        <dbReference type="ChEBI" id="CHEBI:15378"/>
        <dbReference type="ChEBI" id="CHEBI:37565"/>
        <dbReference type="ChEBI" id="CHEBI:43474"/>
        <dbReference type="ChEBI" id="CHEBI:58189"/>
        <dbReference type="EC" id="3.6.5.n1"/>
    </reaction>
</comment>
<comment type="subcellular location">
    <subcellularLocation>
        <location evidence="1">Cell membrane</location>
        <topology evidence="1">Peripheral membrane protein</topology>
        <orientation evidence="1">Cytoplasmic side</orientation>
    </subcellularLocation>
</comment>
<comment type="similarity">
    <text evidence="1">Belongs to the TRAFAC class translation factor GTPase superfamily. Classic translation factor GTPase family. LepA subfamily.</text>
</comment>
<evidence type="ECO:0000255" key="1">
    <source>
        <dbReference type="HAMAP-Rule" id="MF_00071"/>
    </source>
</evidence>
<feature type="chain" id="PRO_0000176349" description="Elongation factor 4">
    <location>
        <begin position="1"/>
        <end position="610"/>
    </location>
</feature>
<feature type="domain" description="tr-type G">
    <location>
        <begin position="11"/>
        <end position="193"/>
    </location>
</feature>
<feature type="binding site" evidence="1">
    <location>
        <begin position="23"/>
        <end position="28"/>
    </location>
    <ligand>
        <name>GTP</name>
        <dbReference type="ChEBI" id="CHEBI:37565"/>
    </ligand>
</feature>
<feature type="binding site" evidence="1">
    <location>
        <begin position="140"/>
        <end position="143"/>
    </location>
    <ligand>
        <name>GTP</name>
        <dbReference type="ChEBI" id="CHEBI:37565"/>
    </ligand>
</feature>
<proteinExistence type="inferred from homology"/>
<gene>
    <name evidence="1" type="primary">lepA</name>
    <name type="ordered locus">SAG0906</name>
</gene>
<keyword id="KW-1003">Cell membrane</keyword>
<keyword id="KW-0342">GTP-binding</keyword>
<keyword id="KW-0378">Hydrolase</keyword>
<keyword id="KW-0472">Membrane</keyword>
<keyword id="KW-0547">Nucleotide-binding</keyword>
<keyword id="KW-0648">Protein biosynthesis</keyword>
<keyword id="KW-1185">Reference proteome</keyword>
<name>LEPA_STRA5</name>